<comment type="function">
    <text evidence="1">Phosphorolytic 3'-5' exoribonuclease that plays an important role in tRNA 3'-end maturation. Removes nucleotide residues following the 3'-CCA terminus of tRNAs; can also add nucleotides to the ends of RNA molecules by using nucleoside diphosphates as substrates, but this may not be physiologically important. Probably plays a role in initiation of 16S rRNA degradation (leading to ribosome degradation) during starvation.</text>
</comment>
<comment type="catalytic activity">
    <reaction evidence="1">
        <text>tRNA(n+1) + phosphate = tRNA(n) + a ribonucleoside 5'-diphosphate</text>
        <dbReference type="Rhea" id="RHEA:10628"/>
        <dbReference type="Rhea" id="RHEA-COMP:17343"/>
        <dbReference type="Rhea" id="RHEA-COMP:17344"/>
        <dbReference type="ChEBI" id="CHEBI:43474"/>
        <dbReference type="ChEBI" id="CHEBI:57930"/>
        <dbReference type="ChEBI" id="CHEBI:173114"/>
        <dbReference type="EC" id="2.7.7.56"/>
    </reaction>
</comment>
<comment type="subunit">
    <text evidence="1">Homohexameric ring arranged as a trimer of dimers.</text>
</comment>
<comment type="similarity">
    <text evidence="1">Belongs to the RNase PH family.</text>
</comment>
<name>RNPH_ANADF</name>
<feature type="chain" id="PRO_1000024772" description="Ribonuclease PH">
    <location>
        <begin position="1"/>
        <end position="238"/>
    </location>
</feature>
<feature type="binding site" evidence="1">
    <location>
        <position position="86"/>
    </location>
    <ligand>
        <name>phosphate</name>
        <dbReference type="ChEBI" id="CHEBI:43474"/>
        <note>substrate</note>
    </ligand>
</feature>
<feature type="binding site" evidence="1">
    <location>
        <begin position="124"/>
        <end position="126"/>
    </location>
    <ligand>
        <name>phosphate</name>
        <dbReference type="ChEBI" id="CHEBI:43474"/>
        <note>substrate</note>
    </ligand>
</feature>
<organism>
    <name type="scientific">Anaeromyxobacter sp. (strain Fw109-5)</name>
    <dbReference type="NCBI Taxonomy" id="404589"/>
    <lineage>
        <taxon>Bacteria</taxon>
        <taxon>Pseudomonadati</taxon>
        <taxon>Myxococcota</taxon>
        <taxon>Myxococcia</taxon>
        <taxon>Myxococcales</taxon>
        <taxon>Cystobacterineae</taxon>
        <taxon>Anaeromyxobacteraceae</taxon>
        <taxon>Anaeromyxobacter</taxon>
    </lineage>
</organism>
<accession>A7HFW3</accession>
<protein>
    <recommendedName>
        <fullName evidence="1">Ribonuclease PH</fullName>
        <shortName evidence="1">RNase PH</shortName>
        <ecNumber evidence="1">2.7.7.56</ecNumber>
    </recommendedName>
    <alternativeName>
        <fullName evidence="1">tRNA nucleotidyltransferase</fullName>
    </alternativeName>
</protein>
<gene>
    <name evidence="1" type="primary">rph</name>
    <name type="ordered locus">Anae109_3425</name>
</gene>
<reference key="1">
    <citation type="journal article" date="2015" name="Genome Announc.">
        <title>Complete genome sequence of Anaeromyxobacter sp. Fw109-5, an anaerobic, metal-reducing bacterium isolated from a contaminated subsurface environment.</title>
        <authorList>
            <person name="Hwang C."/>
            <person name="Copeland A."/>
            <person name="Lucas S."/>
            <person name="Lapidus A."/>
            <person name="Barry K."/>
            <person name="Glavina Del Rio T."/>
            <person name="Dalin E."/>
            <person name="Tice H."/>
            <person name="Pitluck S."/>
            <person name="Sims D."/>
            <person name="Brettin T."/>
            <person name="Bruce D.C."/>
            <person name="Detter J.C."/>
            <person name="Han C.S."/>
            <person name="Schmutz J."/>
            <person name="Larimer F.W."/>
            <person name="Land M.L."/>
            <person name="Hauser L.J."/>
            <person name="Kyrpides N."/>
            <person name="Lykidis A."/>
            <person name="Richardson P."/>
            <person name="Belieav A."/>
            <person name="Sanford R.A."/>
            <person name="Loeffler F.E."/>
            <person name="Fields M.W."/>
        </authorList>
    </citation>
    <scope>NUCLEOTIDE SEQUENCE [LARGE SCALE GENOMIC DNA]</scope>
    <source>
        <strain>Fw109-5</strain>
    </source>
</reference>
<proteinExistence type="inferred from homology"/>
<sequence>MRTNGRGPRDLRNVVLEPGVSKHAEGSCLARFGDTHVLCTASVDEKVPPHVYGTGAGWVTAEYGMLPRSTHERMAREAARGKQGGRTLEIQRLIGRALRAAVDLRALGTRTVTLDCDVIQADGGTRTAAITGGYVALALALRGLQQRKTLSRNPLARSVAAVSVGLVEGEVCVDLDYGEDSTAEVDMNVVATGDGALVEVQGTAEGKPFPRSDLDRMVDAALEAIGRLKERQEQALRG</sequence>
<keyword id="KW-0548">Nucleotidyltransferase</keyword>
<keyword id="KW-1185">Reference proteome</keyword>
<keyword id="KW-0694">RNA-binding</keyword>
<keyword id="KW-0698">rRNA processing</keyword>
<keyword id="KW-0808">Transferase</keyword>
<keyword id="KW-0819">tRNA processing</keyword>
<keyword id="KW-0820">tRNA-binding</keyword>
<dbReference type="EC" id="2.7.7.56" evidence="1"/>
<dbReference type="EMBL" id="CP000769">
    <property type="protein sequence ID" value="ABS27609.1"/>
    <property type="molecule type" value="Genomic_DNA"/>
</dbReference>
<dbReference type="RefSeq" id="WP_012098229.1">
    <property type="nucleotide sequence ID" value="NC_009675.1"/>
</dbReference>
<dbReference type="SMR" id="A7HFW3"/>
<dbReference type="STRING" id="404589.Anae109_3425"/>
<dbReference type="KEGG" id="afw:Anae109_3425"/>
<dbReference type="eggNOG" id="COG0689">
    <property type="taxonomic scope" value="Bacteria"/>
</dbReference>
<dbReference type="HOGENOM" id="CLU_050858_0_0_7"/>
<dbReference type="OrthoDB" id="9802265at2"/>
<dbReference type="Proteomes" id="UP000006382">
    <property type="component" value="Chromosome"/>
</dbReference>
<dbReference type="GO" id="GO:0000175">
    <property type="term" value="F:3'-5'-RNA exonuclease activity"/>
    <property type="evidence" value="ECO:0007669"/>
    <property type="project" value="UniProtKB-UniRule"/>
</dbReference>
<dbReference type="GO" id="GO:0000049">
    <property type="term" value="F:tRNA binding"/>
    <property type="evidence" value="ECO:0007669"/>
    <property type="project" value="UniProtKB-UniRule"/>
</dbReference>
<dbReference type="GO" id="GO:0009022">
    <property type="term" value="F:tRNA nucleotidyltransferase activity"/>
    <property type="evidence" value="ECO:0007669"/>
    <property type="project" value="UniProtKB-UniRule"/>
</dbReference>
<dbReference type="GO" id="GO:0016075">
    <property type="term" value="P:rRNA catabolic process"/>
    <property type="evidence" value="ECO:0007669"/>
    <property type="project" value="UniProtKB-UniRule"/>
</dbReference>
<dbReference type="GO" id="GO:0006364">
    <property type="term" value="P:rRNA processing"/>
    <property type="evidence" value="ECO:0007669"/>
    <property type="project" value="UniProtKB-KW"/>
</dbReference>
<dbReference type="GO" id="GO:0008033">
    <property type="term" value="P:tRNA processing"/>
    <property type="evidence" value="ECO:0007669"/>
    <property type="project" value="UniProtKB-UniRule"/>
</dbReference>
<dbReference type="CDD" id="cd11362">
    <property type="entry name" value="RNase_PH_bact"/>
    <property type="match status" value="1"/>
</dbReference>
<dbReference type="FunFam" id="3.30.230.70:FF:000003">
    <property type="entry name" value="Ribonuclease PH"/>
    <property type="match status" value="1"/>
</dbReference>
<dbReference type="Gene3D" id="3.30.230.70">
    <property type="entry name" value="GHMP Kinase, N-terminal domain"/>
    <property type="match status" value="1"/>
</dbReference>
<dbReference type="HAMAP" id="MF_00564">
    <property type="entry name" value="RNase_PH"/>
    <property type="match status" value="1"/>
</dbReference>
<dbReference type="InterPro" id="IPR001247">
    <property type="entry name" value="ExoRNase_PH_dom1"/>
</dbReference>
<dbReference type="InterPro" id="IPR015847">
    <property type="entry name" value="ExoRNase_PH_dom2"/>
</dbReference>
<dbReference type="InterPro" id="IPR036345">
    <property type="entry name" value="ExoRNase_PH_dom2_sf"/>
</dbReference>
<dbReference type="InterPro" id="IPR027408">
    <property type="entry name" value="PNPase/RNase_PH_dom_sf"/>
</dbReference>
<dbReference type="InterPro" id="IPR020568">
    <property type="entry name" value="Ribosomal_Su5_D2-typ_SF"/>
</dbReference>
<dbReference type="InterPro" id="IPR050080">
    <property type="entry name" value="RNase_PH"/>
</dbReference>
<dbReference type="InterPro" id="IPR002381">
    <property type="entry name" value="RNase_PH_bac-type"/>
</dbReference>
<dbReference type="InterPro" id="IPR018336">
    <property type="entry name" value="RNase_PH_CS"/>
</dbReference>
<dbReference type="NCBIfam" id="TIGR01966">
    <property type="entry name" value="RNasePH"/>
    <property type="match status" value="1"/>
</dbReference>
<dbReference type="PANTHER" id="PTHR11953">
    <property type="entry name" value="EXOSOME COMPLEX COMPONENT"/>
    <property type="match status" value="1"/>
</dbReference>
<dbReference type="PANTHER" id="PTHR11953:SF0">
    <property type="entry name" value="EXOSOME COMPLEX COMPONENT RRP41"/>
    <property type="match status" value="1"/>
</dbReference>
<dbReference type="Pfam" id="PF01138">
    <property type="entry name" value="RNase_PH"/>
    <property type="match status" value="1"/>
</dbReference>
<dbReference type="Pfam" id="PF03725">
    <property type="entry name" value="RNase_PH_C"/>
    <property type="match status" value="1"/>
</dbReference>
<dbReference type="SUPFAM" id="SSF55666">
    <property type="entry name" value="Ribonuclease PH domain 2-like"/>
    <property type="match status" value="1"/>
</dbReference>
<dbReference type="SUPFAM" id="SSF54211">
    <property type="entry name" value="Ribosomal protein S5 domain 2-like"/>
    <property type="match status" value="1"/>
</dbReference>
<dbReference type="PROSITE" id="PS01277">
    <property type="entry name" value="RIBONUCLEASE_PH"/>
    <property type="match status" value="1"/>
</dbReference>
<evidence type="ECO:0000255" key="1">
    <source>
        <dbReference type="HAMAP-Rule" id="MF_00564"/>
    </source>
</evidence>